<comment type="function">
    <text evidence="1">Catalyzes the transfer of the cytidylyl group of CTP to D-ribitol 5-phosphate.</text>
</comment>
<comment type="catalytic activity">
    <reaction evidence="1">
        <text>D-ribitol 5-phosphate + CTP + H(+) = CDP-L-ribitol + diphosphate</text>
        <dbReference type="Rhea" id="RHEA:12456"/>
        <dbReference type="ChEBI" id="CHEBI:15378"/>
        <dbReference type="ChEBI" id="CHEBI:33019"/>
        <dbReference type="ChEBI" id="CHEBI:37563"/>
        <dbReference type="ChEBI" id="CHEBI:57608"/>
        <dbReference type="ChEBI" id="CHEBI:57695"/>
        <dbReference type="EC" id="2.7.7.40"/>
    </reaction>
</comment>
<comment type="pathway">
    <text evidence="1">Cell wall biogenesis; poly(ribitol phosphate) teichoic acid biosynthesis.</text>
</comment>
<comment type="similarity">
    <text evidence="1">Belongs to the IspD/TarI cytidylyltransferase family. TarI subfamily.</text>
</comment>
<organism>
    <name type="scientific">Staphylococcus aureus (strain MW2)</name>
    <dbReference type="NCBI Taxonomy" id="196620"/>
    <lineage>
        <taxon>Bacteria</taxon>
        <taxon>Bacillati</taxon>
        <taxon>Bacillota</taxon>
        <taxon>Bacilli</taxon>
        <taxon>Bacillales</taxon>
        <taxon>Staphylococcaceae</taxon>
        <taxon>Staphylococcus</taxon>
    </lineage>
</organism>
<feature type="chain" id="PRO_0000075624" description="Ribitol-5-phosphate cytidylyltransferase 1">
    <location>
        <begin position="1"/>
        <end position="238"/>
    </location>
</feature>
<feature type="binding site" evidence="1">
    <location>
        <begin position="7"/>
        <end position="10"/>
    </location>
    <ligand>
        <name>CTP</name>
        <dbReference type="ChEBI" id="CHEBI:37563"/>
    </ligand>
</feature>
<feature type="binding site" evidence="1">
    <location>
        <begin position="81"/>
        <end position="87"/>
    </location>
    <ligand>
        <name>CTP</name>
        <dbReference type="ChEBI" id="CHEBI:37563"/>
    </ligand>
</feature>
<feature type="site" description="Transition state stabilizer" evidence="1">
    <location>
        <position position="14"/>
    </location>
</feature>
<feature type="site" description="Transition state stabilizer" evidence="1">
    <location>
        <position position="22"/>
    </location>
</feature>
<feature type="site" description="Positions ribitol 5-phosphate for the nucleophilic attack" evidence="1">
    <location>
        <position position="160"/>
    </location>
</feature>
<feature type="site" description="Positions ribitol 5-phosphate for the nucleophilic attack" evidence="1">
    <location>
        <position position="217"/>
    </location>
</feature>
<accession>Q7A1W0</accession>
<keyword id="KW-0961">Cell wall biogenesis/degradation</keyword>
<keyword id="KW-0548">Nucleotidyltransferase</keyword>
<keyword id="KW-0777">Teichoic acid biosynthesis</keyword>
<keyword id="KW-0808">Transferase</keyword>
<dbReference type="EC" id="2.7.7.40" evidence="1"/>
<dbReference type="EMBL" id="BA000033">
    <property type="protein sequence ID" value="BAB94096.1"/>
    <property type="molecule type" value="Genomic_DNA"/>
</dbReference>
<dbReference type="RefSeq" id="WP_000872486.1">
    <property type="nucleotide sequence ID" value="NC_003923.1"/>
</dbReference>
<dbReference type="SMR" id="Q7A1W0"/>
<dbReference type="KEGG" id="sam:MW0231"/>
<dbReference type="HOGENOM" id="CLU_061281_2_3_9"/>
<dbReference type="UniPathway" id="UPA00790"/>
<dbReference type="GO" id="GO:0050518">
    <property type="term" value="F:2-C-methyl-D-erythritol 4-phosphate cytidylyltransferase activity"/>
    <property type="evidence" value="ECO:0007669"/>
    <property type="project" value="TreeGrafter"/>
</dbReference>
<dbReference type="GO" id="GO:0047349">
    <property type="term" value="F:D-ribitol-5-phosphate cytidylyltransferase activity"/>
    <property type="evidence" value="ECO:0007669"/>
    <property type="project" value="UniProtKB-UniRule"/>
</dbReference>
<dbReference type="GO" id="GO:0071555">
    <property type="term" value="P:cell wall organization"/>
    <property type="evidence" value="ECO:0007669"/>
    <property type="project" value="UniProtKB-KW"/>
</dbReference>
<dbReference type="GO" id="GO:0008299">
    <property type="term" value="P:isoprenoid biosynthetic process"/>
    <property type="evidence" value="ECO:0007669"/>
    <property type="project" value="InterPro"/>
</dbReference>
<dbReference type="GO" id="GO:1902012">
    <property type="term" value="P:poly(ribitol phosphate) teichoic acid biosynthetic process"/>
    <property type="evidence" value="ECO:0007669"/>
    <property type="project" value="UniProtKB-UniRule"/>
</dbReference>
<dbReference type="CDD" id="cd02516">
    <property type="entry name" value="CDP-ME_synthetase"/>
    <property type="match status" value="1"/>
</dbReference>
<dbReference type="FunFam" id="3.90.550.10:FF:000003">
    <property type="entry name" value="2-C-methyl-D-erythritol 4-phosphate cytidylyltransferase"/>
    <property type="match status" value="1"/>
</dbReference>
<dbReference type="Gene3D" id="3.90.550.10">
    <property type="entry name" value="Spore Coat Polysaccharide Biosynthesis Protein SpsA, Chain A"/>
    <property type="match status" value="1"/>
</dbReference>
<dbReference type="HAMAP" id="MF_02068">
    <property type="entry name" value="TarI"/>
    <property type="match status" value="1"/>
</dbReference>
<dbReference type="InterPro" id="IPR034683">
    <property type="entry name" value="IspD/TarI"/>
</dbReference>
<dbReference type="InterPro" id="IPR050088">
    <property type="entry name" value="IspD/TarI_cytidylyltransf_bact"/>
</dbReference>
<dbReference type="InterPro" id="IPR018294">
    <property type="entry name" value="ISPD_synthase_CS"/>
</dbReference>
<dbReference type="InterPro" id="IPR029044">
    <property type="entry name" value="Nucleotide-diphossugar_trans"/>
</dbReference>
<dbReference type="InterPro" id="IPR034709">
    <property type="entry name" value="TarI"/>
</dbReference>
<dbReference type="NCBIfam" id="NF001183">
    <property type="entry name" value="PRK00155.1-3"/>
    <property type="match status" value="1"/>
</dbReference>
<dbReference type="NCBIfam" id="NF009924">
    <property type="entry name" value="PRK13385.1"/>
    <property type="match status" value="1"/>
</dbReference>
<dbReference type="PANTHER" id="PTHR32125">
    <property type="entry name" value="2-C-METHYL-D-ERYTHRITOL 4-PHOSPHATE CYTIDYLYLTRANSFERASE, CHLOROPLASTIC"/>
    <property type="match status" value="1"/>
</dbReference>
<dbReference type="PANTHER" id="PTHR32125:SF8">
    <property type="entry name" value="RIBITOL-5-PHOSPHATE CYTIDYLYLTRANSFERASE"/>
    <property type="match status" value="1"/>
</dbReference>
<dbReference type="Pfam" id="PF01128">
    <property type="entry name" value="IspD"/>
    <property type="match status" value="1"/>
</dbReference>
<dbReference type="SUPFAM" id="SSF53448">
    <property type="entry name" value="Nucleotide-diphospho-sugar transferases"/>
    <property type="match status" value="1"/>
</dbReference>
<dbReference type="PROSITE" id="PS01295">
    <property type="entry name" value="ISPD"/>
    <property type="match status" value="1"/>
</dbReference>
<reference key="1">
    <citation type="journal article" date="2002" name="Lancet">
        <title>Genome and virulence determinants of high virulence community-acquired MRSA.</title>
        <authorList>
            <person name="Baba T."/>
            <person name="Takeuchi F."/>
            <person name="Kuroda M."/>
            <person name="Yuzawa H."/>
            <person name="Aoki K."/>
            <person name="Oguchi A."/>
            <person name="Nagai Y."/>
            <person name="Iwama N."/>
            <person name="Asano K."/>
            <person name="Naimi T."/>
            <person name="Kuroda H."/>
            <person name="Cui L."/>
            <person name="Yamamoto K."/>
            <person name="Hiramatsu K."/>
        </authorList>
    </citation>
    <scope>NUCLEOTIDE SEQUENCE [LARGE SCALE GENOMIC DNA]</scope>
    <source>
        <strain>MW2</strain>
    </source>
</reference>
<proteinExistence type="inferred from homology"/>
<name>TARI1_STAAW</name>
<sequence length="238" mass="26657">MKYAGILAGGIGSRMGNVPLPKQFLDLDNKPILIHTLEKFILINDFEKIIIATPQQWMTHTKDTLRKFKISDERIEVIQGGSDRNDTIMNIVKHIESTNGINDDDVIVTHDAVRPFLTHRIIKENIQAALEYGAVDTVIDAIDTIVTSKDNQTIDAIPVRNEMYQGQTPQSFNINLLKESYAQLSDEQKSILSDACKIIVETNKPVRLVKGELYNIKVTTPYDLKVANAIIRGGIADD</sequence>
<evidence type="ECO:0000255" key="1">
    <source>
        <dbReference type="HAMAP-Rule" id="MF_02068"/>
    </source>
</evidence>
<gene>
    <name evidence="1" type="primary">tarI1</name>
    <name type="ordered locus">MW0231</name>
</gene>
<protein>
    <recommendedName>
        <fullName evidence="1">Ribitol-5-phosphate cytidylyltransferase 1</fullName>
        <ecNumber evidence="1">2.7.7.40</ecNumber>
    </recommendedName>
</protein>